<organism>
    <name type="scientific">Lacticaseibacillus casei</name>
    <name type="common">Lactobacillus casei</name>
    <dbReference type="NCBI Taxonomy" id="1582"/>
    <lineage>
        <taxon>Bacteria</taxon>
        <taxon>Bacillati</taxon>
        <taxon>Bacillota</taxon>
        <taxon>Bacilli</taxon>
        <taxon>Lactobacillales</taxon>
        <taxon>Lactobacillaceae</taxon>
        <taxon>Lacticaseibacillus</taxon>
    </lineage>
</organism>
<accession>O84905</accession>
<dbReference type="EMBL" id="AF005933">
    <property type="protein sequence ID" value="AAC19331.1"/>
    <property type="molecule type" value="Genomic_DNA"/>
</dbReference>
<dbReference type="SMR" id="O84905"/>
<dbReference type="STRING" id="1582.AAW28_10640"/>
<dbReference type="eggNOG" id="COG1609">
    <property type="taxonomic scope" value="Bacteria"/>
</dbReference>
<dbReference type="UniPathway" id="UPA00214"/>
<dbReference type="GO" id="GO:0003700">
    <property type="term" value="F:DNA-binding transcription factor activity"/>
    <property type="evidence" value="ECO:0007669"/>
    <property type="project" value="TreeGrafter"/>
</dbReference>
<dbReference type="GO" id="GO:0000976">
    <property type="term" value="F:transcription cis-regulatory region binding"/>
    <property type="evidence" value="ECO:0007669"/>
    <property type="project" value="TreeGrafter"/>
</dbReference>
<dbReference type="GO" id="GO:0006012">
    <property type="term" value="P:galactose metabolic process"/>
    <property type="evidence" value="ECO:0007669"/>
    <property type="project" value="UniProtKB-UniPathway"/>
</dbReference>
<dbReference type="CDD" id="cd01392">
    <property type="entry name" value="HTH_LacI"/>
    <property type="match status" value="1"/>
</dbReference>
<dbReference type="CDD" id="cd01544">
    <property type="entry name" value="PBP1_GalR"/>
    <property type="match status" value="1"/>
</dbReference>
<dbReference type="Gene3D" id="3.40.50.2300">
    <property type="match status" value="2"/>
</dbReference>
<dbReference type="Gene3D" id="1.10.260.40">
    <property type="entry name" value="lambda repressor-like DNA-binding domains"/>
    <property type="match status" value="1"/>
</dbReference>
<dbReference type="InterPro" id="IPR000843">
    <property type="entry name" value="HTH_LacI"/>
</dbReference>
<dbReference type="InterPro" id="IPR046335">
    <property type="entry name" value="LacI/GalR-like_sensor"/>
</dbReference>
<dbReference type="InterPro" id="IPR010982">
    <property type="entry name" value="Lambda_DNA-bd_dom_sf"/>
</dbReference>
<dbReference type="InterPro" id="IPR028082">
    <property type="entry name" value="Peripla_BP_I"/>
</dbReference>
<dbReference type="PANTHER" id="PTHR30146:SF149">
    <property type="entry name" value="HTH-TYPE TRANSCRIPTIONAL REGULATOR EBGR"/>
    <property type="match status" value="1"/>
</dbReference>
<dbReference type="PANTHER" id="PTHR30146">
    <property type="entry name" value="LACI-RELATED TRANSCRIPTIONAL REPRESSOR"/>
    <property type="match status" value="1"/>
</dbReference>
<dbReference type="Pfam" id="PF00356">
    <property type="entry name" value="LacI"/>
    <property type="match status" value="1"/>
</dbReference>
<dbReference type="Pfam" id="PF13377">
    <property type="entry name" value="Peripla_BP_3"/>
    <property type="match status" value="1"/>
</dbReference>
<dbReference type="PRINTS" id="PR00036">
    <property type="entry name" value="HTHLACI"/>
</dbReference>
<dbReference type="SMART" id="SM00354">
    <property type="entry name" value="HTH_LACI"/>
    <property type="match status" value="1"/>
</dbReference>
<dbReference type="SUPFAM" id="SSF47413">
    <property type="entry name" value="lambda repressor-like DNA-binding domains"/>
    <property type="match status" value="1"/>
</dbReference>
<dbReference type="SUPFAM" id="SSF53822">
    <property type="entry name" value="Periplasmic binding protein-like I"/>
    <property type="match status" value="1"/>
</dbReference>
<dbReference type="PROSITE" id="PS00356">
    <property type="entry name" value="HTH_LACI_1"/>
    <property type="match status" value="1"/>
</dbReference>
<dbReference type="PROSITE" id="PS50932">
    <property type="entry name" value="HTH_LACI_2"/>
    <property type="match status" value="1"/>
</dbReference>
<gene>
    <name type="primary">galR</name>
</gene>
<proteinExistence type="inferred from homology"/>
<feature type="chain" id="PRO_0000107954" description="HTH-type transcriptional regulator GalR">
    <location>
        <begin position="1"/>
        <end position="331"/>
    </location>
</feature>
<feature type="domain" description="HTH lacI-type" evidence="2">
    <location>
        <begin position="1"/>
        <end position="58"/>
    </location>
</feature>
<feature type="DNA-binding region" description="H-T-H motif" evidence="2">
    <location>
        <begin position="4"/>
        <end position="23"/>
    </location>
</feature>
<protein>
    <recommendedName>
        <fullName>HTH-type transcriptional regulator GalR</fullName>
    </recommendedName>
    <alternativeName>
        <fullName>Galactose operon repressor</fullName>
    </alternativeName>
</protein>
<reference key="1">
    <citation type="journal article" date="1998" name="Appl. Environ. Microbiol.">
        <title>The gal genes for the Leloir pathway of Lactobacillus casei 64H.</title>
        <authorList>
            <person name="Bettenbrock K."/>
            <person name="Alpert C.-A."/>
        </authorList>
    </citation>
    <scope>NUCLEOTIDE SEQUENCE [GENOMIC DNA]</scope>
    <source>
        <strain>64H</strain>
    </source>
</reference>
<sequence>MTTITDIAKAAGVSIATVSRILNYDTTLAVTPETRQRVLKTAEKLAYKPRRRKRVSPQTTVALIQWRSEQEELNDLYYLQIQYAIEARAASAGYHLQSLHLEQLAAETTQNVQGVIALGKYDAGEVATIKALAQPVVFVDQNMLAFDCDSVTSDYAGPIEQIIHHFQSVGINDIGFLGGVETSRSGREQFQDVRTAAFDRVMHAENLMQPAFRFIGAFTPDSGYELMKQAITKLGDTLPHGFIVANDTMAVGALRALNEAKIEVPQRVSVISFNDVAVAKFTTPPLSTVHAATDQMGQTAVELLQARIKDPKRIPRQVNFKSELIMRASSL</sequence>
<keyword id="KW-0119">Carbohydrate metabolism</keyword>
<keyword id="KW-0238">DNA-binding</keyword>
<keyword id="KW-0299">Galactose metabolism</keyword>
<keyword id="KW-0678">Repressor</keyword>
<keyword id="KW-0804">Transcription</keyword>
<keyword id="KW-0805">Transcription regulation</keyword>
<name>GALR_LACCA</name>
<evidence type="ECO:0000250" key="1"/>
<evidence type="ECO:0000255" key="2">
    <source>
        <dbReference type="PROSITE-ProRule" id="PRU00111"/>
    </source>
</evidence>
<comment type="function">
    <text evidence="1">Repressor of the galactose operon. Binds galactose as an inducer (By similarity).</text>
</comment>
<comment type="pathway">
    <text>Carbohydrate metabolism; galactose metabolism [regulation].</text>
</comment>